<proteinExistence type="evidence at transcript level"/>
<dbReference type="EC" id="3.4.23.-" evidence="1"/>
<dbReference type="EMBL" id="BX284605">
    <property type="protein sequence ID" value="CAD31821.1"/>
    <property type="molecule type" value="Genomic_DNA"/>
</dbReference>
<dbReference type="RefSeq" id="NP_741673.1">
    <property type="nucleotide sequence ID" value="NM_171583.5"/>
</dbReference>
<dbReference type="SMR" id="Q8MYN5"/>
<dbReference type="FunCoup" id="Q8MYN5">
    <property type="interactions" value="15"/>
</dbReference>
<dbReference type="STRING" id="6239.Y39B6A.24.1"/>
<dbReference type="MEROPS" id="A01.A86"/>
<dbReference type="GlyCosmos" id="Q8MYN5">
    <property type="glycosylation" value="2 sites, No reported glycans"/>
</dbReference>
<dbReference type="PaxDb" id="6239-Y39B6A.24"/>
<dbReference type="PeptideAtlas" id="Q8MYN5"/>
<dbReference type="EnsemblMetazoa" id="Y39B6A.24.1">
    <property type="protein sequence ID" value="Y39B6A.24.1"/>
    <property type="gene ID" value="WBGene00012683"/>
</dbReference>
<dbReference type="GeneID" id="180250"/>
<dbReference type="KEGG" id="cel:CELE_Y39B6A.24"/>
<dbReference type="UCSC" id="Y39B6A.24.1">
    <property type="organism name" value="c. elegans"/>
</dbReference>
<dbReference type="AGR" id="WB:WBGene00012683"/>
<dbReference type="CTD" id="180250"/>
<dbReference type="WormBase" id="Y39B6A.24">
    <property type="protein sequence ID" value="CE29865"/>
    <property type="gene ID" value="WBGene00012683"/>
    <property type="gene designation" value="asp-17"/>
</dbReference>
<dbReference type="eggNOG" id="KOG1339">
    <property type="taxonomic scope" value="Eukaryota"/>
</dbReference>
<dbReference type="GeneTree" id="ENSGT00970000195900"/>
<dbReference type="HOGENOM" id="CLU_013253_3_4_1"/>
<dbReference type="InParanoid" id="Q8MYN5"/>
<dbReference type="OMA" id="THATWDE"/>
<dbReference type="OrthoDB" id="5853681at2759"/>
<dbReference type="PhylomeDB" id="Q8MYN5"/>
<dbReference type="Reactome" id="R-CEL-2022377">
    <property type="pathway name" value="Metabolism of Angiotensinogen to Angiotensins"/>
</dbReference>
<dbReference type="PRO" id="PR:Q8MYN5"/>
<dbReference type="Proteomes" id="UP000001940">
    <property type="component" value="Chromosome V"/>
</dbReference>
<dbReference type="Bgee" id="WBGene00012683">
    <property type="expression patterns" value="Expressed in adult organism and 1 other cell type or tissue"/>
</dbReference>
<dbReference type="GO" id="GO:0005576">
    <property type="term" value="C:extracellular region"/>
    <property type="evidence" value="ECO:0007669"/>
    <property type="project" value="UniProtKB-SubCell"/>
</dbReference>
<dbReference type="GO" id="GO:0005764">
    <property type="term" value="C:lysosome"/>
    <property type="evidence" value="ECO:0000318"/>
    <property type="project" value="GO_Central"/>
</dbReference>
<dbReference type="GO" id="GO:0004190">
    <property type="term" value="F:aspartic-type endopeptidase activity"/>
    <property type="evidence" value="ECO:0000318"/>
    <property type="project" value="GO_Central"/>
</dbReference>
<dbReference type="GO" id="GO:0006915">
    <property type="term" value="P:apoptotic process"/>
    <property type="evidence" value="ECO:0000318"/>
    <property type="project" value="GO_Central"/>
</dbReference>
<dbReference type="GO" id="GO:0006508">
    <property type="term" value="P:proteolysis"/>
    <property type="evidence" value="ECO:0000318"/>
    <property type="project" value="GO_Central"/>
</dbReference>
<dbReference type="CDD" id="cd05471">
    <property type="entry name" value="pepsin_like"/>
    <property type="match status" value="1"/>
</dbReference>
<dbReference type="FunFam" id="2.40.70.10:FF:000052">
    <property type="entry name" value="ASpartyl Protease"/>
    <property type="match status" value="1"/>
</dbReference>
<dbReference type="FunFam" id="2.40.70.10:FF:000086">
    <property type="entry name" value="ASpartyl Protease"/>
    <property type="match status" value="1"/>
</dbReference>
<dbReference type="Gene3D" id="2.40.70.10">
    <property type="entry name" value="Acid Proteases"/>
    <property type="match status" value="2"/>
</dbReference>
<dbReference type="InterPro" id="IPR001461">
    <property type="entry name" value="Aspartic_peptidase_A1"/>
</dbReference>
<dbReference type="InterPro" id="IPR001969">
    <property type="entry name" value="Aspartic_peptidase_AS"/>
</dbReference>
<dbReference type="InterPro" id="IPR034164">
    <property type="entry name" value="Pepsin-like_dom"/>
</dbReference>
<dbReference type="InterPro" id="IPR033121">
    <property type="entry name" value="PEPTIDASE_A1"/>
</dbReference>
<dbReference type="InterPro" id="IPR021109">
    <property type="entry name" value="Peptidase_aspartic_dom_sf"/>
</dbReference>
<dbReference type="PANTHER" id="PTHR47966:SF8">
    <property type="entry name" value="ASPARTIC PROTEASE 1-RELATED"/>
    <property type="match status" value="1"/>
</dbReference>
<dbReference type="PANTHER" id="PTHR47966">
    <property type="entry name" value="BETA-SITE APP-CLEAVING ENZYME, ISOFORM A-RELATED"/>
    <property type="match status" value="1"/>
</dbReference>
<dbReference type="Pfam" id="PF00026">
    <property type="entry name" value="Asp"/>
    <property type="match status" value="1"/>
</dbReference>
<dbReference type="PRINTS" id="PR00792">
    <property type="entry name" value="PEPSIN"/>
</dbReference>
<dbReference type="SUPFAM" id="SSF50630">
    <property type="entry name" value="Acid proteases"/>
    <property type="match status" value="1"/>
</dbReference>
<dbReference type="PROSITE" id="PS00141">
    <property type="entry name" value="ASP_PROTEASE"/>
    <property type="match status" value="2"/>
</dbReference>
<dbReference type="PROSITE" id="PS51767">
    <property type="entry name" value="PEPTIDASE_A1"/>
    <property type="match status" value="1"/>
</dbReference>
<feature type="signal peptide" evidence="2">
    <location>
        <begin position="1"/>
        <end position="15"/>
    </location>
</feature>
<feature type="chain" id="PRO_5012067955" description="Aspartic protease 17">
    <location>
        <begin position="16"/>
        <end position="391"/>
    </location>
</feature>
<feature type="domain" description="Peptidase A1" evidence="4">
    <location>
        <begin position="65"/>
        <end position="385"/>
    </location>
</feature>
<feature type="active site" evidence="4">
    <location>
        <position position="83"/>
    </location>
</feature>
<feature type="active site" evidence="4">
    <location>
        <position position="274"/>
    </location>
</feature>
<feature type="glycosylation site" description="N-linked (GlcNAc...) asparagine" evidence="3">
    <location>
        <position position="68"/>
    </location>
</feature>
<feature type="glycosylation site" description="N-linked (GlcNAc...) asparagine" evidence="3">
    <location>
        <position position="108"/>
    </location>
</feature>
<feature type="disulfide bond" evidence="4">
    <location>
        <begin position="309"/>
        <end position="345"/>
    </location>
</feature>
<comment type="function">
    <text evidence="1">Aspartic proteinase.</text>
</comment>
<comment type="subcellular location">
    <subcellularLocation>
        <location evidence="6">Secreted</location>
    </subcellularLocation>
</comment>
<comment type="tissue specificity">
    <text evidence="5">Expressed in intestinal cells.</text>
</comment>
<comment type="induction">
    <text evidence="5">Induced in response to thermal stress in conditions where severe cold temperatures are followed by warmer temperatures (PubMed:29664006). In particular, induced in the warming phase (10 to 22 degrees Celsius) during the cold (4 degrees Celsius) to warm (22 degrees Celsius) temperature transition (PubMed:29664006).</text>
</comment>
<comment type="similarity">
    <text evidence="4">Belongs to the peptidase A1 family.</text>
</comment>
<sequence>MHLIFLLFLAPFCSAAVFQLPTKSTGSLRAKLIRAGKYQEFLITQHAARLNTISQPISDYSDEVYLGNFTVGTPPQPVSLVLDTGSANMWVIDASCDNMFCNGWIGSNYTRQKFDTSKSSSFSRENRKFSIQYGKGLCSGYLGTDTVGLGGGLTIRKQELGIANKLDVDFAVQPMDGIFGLAWPALAVDQITPPMQNLISQLDVPVFSVWLDRKIQASHGGSAGMITYGGIDTKNCDAGVTYVPLTAKTYWQFKMDGFAVGTYSQYGYNQVISDTGSSWISAPYAMINDIATQTHATWDEMNEIYTVKCSTMKTQPDLVFTIGGALFPVKSVEYILDIGLDEGKCALAISPLMASGFGPSWILGDVFIRQYCNIYDIGNARIGFANAHHSF</sequence>
<gene>
    <name evidence="8" type="primary">asp-17</name>
    <name evidence="8" type="ORF">Y39B6A.24</name>
</gene>
<protein>
    <recommendedName>
        <fullName evidence="6">Aspartic protease 17</fullName>
        <ecNumber evidence="1">3.4.23.-</ecNumber>
    </recommendedName>
</protein>
<organism evidence="7">
    <name type="scientific">Caenorhabditis elegans</name>
    <dbReference type="NCBI Taxonomy" id="6239"/>
    <lineage>
        <taxon>Eukaryota</taxon>
        <taxon>Metazoa</taxon>
        <taxon>Ecdysozoa</taxon>
        <taxon>Nematoda</taxon>
        <taxon>Chromadorea</taxon>
        <taxon>Rhabditida</taxon>
        <taxon>Rhabditina</taxon>
        <taxon>Rhabditomorpha</taxon>
        <taxon>Rhabditoidea</taxon>
        <taxon>Rhabditidae</taxon>
        <taxon>Peloderinae</taxon>
        <taxon>Caenorhabditis</taxon>
    </lineage>
</organism>
<name>ASP17_CAEEL</name>
<accession>Q8MYN5</accession>
<keyword id="KW-0064">Aspartyl protease</keyword>
<keyword id="KW-1015">Disulfide bond</keyword>
<keyword id="KW-0325">Glycoprotein</keyword>
<keyword id="KW-0378">Hydrolase</keyword>
<keyword id="KW-0645">Protease</keyword>
<keyword id="KW-1185">Reference proteome</keyword>
<keyword id="KW-0964">Secreted</keyword>
<keyword id="KW-0732">Signal</keyword>
<reference evidence="7" key="1">
    <citation type="journal article" date="1998" name="Science">
        <title>Genome sequence of the nematode C. elegans: a platform for investigating biology.</title>
        <authorList>
            <consortium name="The C. elegans sequencing consortium"/>
        </authorList>
    </citation>
    <scope>NUCLEOTIDE SEQUENCE [LARGE SCALE GENOMIC DNA]</scope>
    <source>
        <strain evidence="7">Bristol N2</strain>
    </source>
</reference>
<reference evidence="6" key="2">
    <citation type="journal article" date="2018" name="Elife">
        <title>A genetic program mediates cold-warming response and promotes stress-induced phenoptosis in C. elegans.</title>
        <authorList>
            <person name="Jiang W."/>
            <person name="Wei Y."/>
            <person name="Long Y."/>
            <person name="Owen A."/>
            <person name="Wang B."/>
            <person name="Wu X."/>
            <person name="Luo S."/>
            <person name="Dang Y."/>
            <person name="Ma D.K."/>
        </authorList>
    </citation>
    <scope>TISSUE SPECIFICITY</scope>
    <scope>INDUCTION</scope>
</reference>
<evidence type="ECO:0000250" key="1">
    <source>
        <dbReference type="UniProtKB" id="Q9LTW4"/>
    </source>
</evidence>
<evidence type="ECO:0000255" key="2"/>
<evidence type="ECO:0000255" key="3">
    <source>
        <dbReference type="PROSITE-ProRule" id="PRU00498"/>
    </source>
</evidence>
<evidence type="ECO:0000255" key="4">
    <source>
        <dbReference type="PROSITE-ProRule" id="PRU01103"/>
    </source>
</evidence>
<evidence type="ECO:0000269" key="5">
    <source>
    </source>
</evidence>
<evidence type="ECO:0000305" key="6"/>
<evidence type="ECO:0000312" key="7">
    <source>
        <dbReference type="Proteomes" id="UP000001940"/>
    </source>
</evidence>
<evidence type="ECO:0000312" key="8">
    <source>
        <dbReference type="WormBase" id="Y39B6A.24"/>
    </source>
</evidence>